<feature type="chain" id="PRO_1000097619" description="3-dehydroquinate dehydratase">
    <location>
        <begin position="1"/>
        <end position="151"/>
    </location>
</feature>
<feature type="active site" description="Proton acceptor" evidence="1">
    <location>
        <position position="26"/>
    </location>
</feature>
<feature type="active site" description="Proton donor" evidence="1">
    <location>
        <position position="101"/>
    </location>
</feature>
<feature type="binding site" evidence="1">
    <location>
        <position position="75"/>
    </location>
    <ligand>
        <name>substrate</name>
    </ligand>
</feature>
<feature type="binding site" evidence="1">
    <location>
        <position position="81"/>
    </location>
    <ligand>
        <name>substrate</name>
    </ligand>
</feature>
<feature type="binding site" evidence="1">
    <location>
        <position position="88"/>
    </location>
    <ligand>
        <name>substrate</name>
    </ligand>
</feature>
<feature type="binding site" evidence="1">
    <location>
        <begin position="102"/>
        <end position="103"/>
    </location>
    <ligand>
        <name>substrate</name>
    </ligand>
</feature>
<feature type="binding site" evidence="1">
    <location>
        <position position="112"/>
    </location>
    <ligand>
        <name>substrate</name>
    </ligand>
</feature>
<feature type="site" description="Transition state stabilizer" evidence="1">
    <location>
        <position position="21"/>
    </location>
</feature>
<proteinExistence type="inferred from homology"/>
<comment type="function">
    <text evidence="1">Catalyzes a trans-dehydration via an enolate intermediate.</text>
</comment>
<comment type="catalytic activity">
    <reaction evidence="1">
        <text>3-dehydroquinate = 3-dehydroshikimate + H2O</text>
        <dbReference type="Rhea" id="RHEA:21096"/>
        <dbReference type="ChEBI" id="CHEBI:15377"/>
        <dbReference type="ChEBI" id="CHEBI:16630"/>
        <dbReference type="ChEBI" id="CHEBI:32364"/>
        <dbReference type="EC" id="4.2.1.10"/>
    </reaction>
</comment>
<comment type="pathway">
    <text evidence="1">Metabolic intermediate biosynthesis; chorismate biosynthesis; chorismate from D-erythrose 4-phosphate and phosphoenolpyruvate: step 3/7.</text>
</comment>
<comment type="subunit">
    <text evidence="1">Homododecamer.</text>
</comment>
<comment type="similarity">
    <text evidence="1">Belongs to the type-II 3-dehydroquinase family.</text>
</comment>
<evidence type="ECO:0000255" key="1">
    <source>
        <dbReference type="HAMAP-Rule" id="MF_00169"/>
    </source>
</evidence>
<sequence length="151" mass="16384">MSTTVKILLLNGPNLNLLGRREPGHYGHQTLATIVSELSTQAQQASVSLEHLQSNAEHELIDAIHATDAQFIIINPAAFTHTSVALRDALLGVAIPFIEVHLSNVHAREPFRQHSYFSDKALGVICGLGAQGYKFALQAALSHLSDKQLQS</sequence>
<gene>
    <name evidence="1" type="primary">aroQ</name>
    <name type="ordered locus">Sden_3285</name>
</gene>
<reference key="1">
    <citation type="submission" date="2006-03" db="EMBL/GenBank/DDBJ databases">
        <title>Complete sequence of Shewanella denitrificans OS217.</title>
        <authorList>
            <consortium name="US DOE Joint Genome Institute"/>
            <person name="Copeland A."/>
            <person name="Lucas S."/>
            <person name="Lapidus A."/>
            <person name="Barry K."/>
            <person name="Detter J.C."/>
            <person name="Glavina del Rio T."/>
            <person name="Hammon N."/>
            <person name="Israni S."/>
            <person name="Dalin E."/>
            <person name="Tice H."/>
            <person name="Pitluck S."/>
            <person name="Brettin T."/>
            <person name="Bruce D."/>
            <person name="Han C."/>
            <person name="Tapia R."/>
            <person name="Gilna P."/>
            <person name="Kiss H."/>
            <person name="Schmutz J."/>
            <person name="Larimer F."/>
            <person name="Land M."/>
            <person name="Hauser L."/>
            <person name="Kyrpides N."/>
            <person name="Lykidis A."/>
            <person name="Richardson P."/>
        </authorList>
    </citation>
    <scope>NUCLEOTIDE SEQUENCE [LARGE SCALE GENOMIC DNA]</scope>
    <source>
        <strain>OS217 / ATCC BAA-1090 / DSM 15013</strain>
    </source>
</reference>
<name>AROQ_SHEDO</name>
<accession>Q12J15</accession>
<dbReference type="EC" id="4.2.1.10" evidence="1"/>
<dbReference type="EMBL" id="CP000302">
    <property type="protein sequence ID" value="ABE56561.1"/>
    <property type="molecule type" value="Genomic_DNA"/>
</dbReference>
<dbReference type="RefSeq" id="WP_011497706.1">
    <property type="nucleotide sequence ID" value="NC_007954.1"/>
</dbReference>
<dbReference type="SMR" id="Q12J15"/>
<dbReference type="STRING" id="318161.Sden_3285"/>
<dbReference type="KEGG" id="sdn:Sden_3285"/>
<dbReference type="eggNOG" id="COG0757">
    <property type="taxonomic scope" value="Bacteria"/>
</dbReference>
<dbReference type="HOGENOM" id="CLU_090968_1_0_6"/>
<dbReference type="OrthoDB" id="9790793at2"/>
<dbReference type="UniPathway" id="UPA00053">
    <property type="reaction ID" value="UER00086"/>
</dbReference>
<dbReference type="Proteomes" id="UP000001982">
    <property type="component" value="Chromosome"/>
</dbReference>
<dbReference type="GO" id="GO:0003855">
    <property type="term" value="F:3-dehydroquinate dehydratase activity"/>
    <property type="evidence" value="ECO:0007669"/>
    <property type="project" value="UniProtKB-UniRule"/>
</dbReference>
<dbReference type="GO" id="GO:0008652">
    <property type="term" value="P:amino acid biosynthetic process"/>
    <property type="evidence" value="ECO:0007669"/>
    <property type="project" value="UniProtKB-KW"/>
</dbReference>
<dbReference type="GO" id="GO:0009073">
    <property type="term" value="P:aromatic amino acid family biosynthetic process"/>
    <property type="evidence" value="ECO:0007669"/>
    <property type="project" value="UniProtKB-KW"/>
</dbReference>
<dbReference type="GO" id="GO:0009423">
    <property type="term" value="P:chorismate biosynthetic process"/>
    <property type="evidence" value="ECO:0007669"/>
    <property type="project" value="UniProtKB-UniRule"/>
</dbReference>
<dbReference type="GO" id="GO:0019631">
    <property type="term" value="P:quinate catabolic process"/>
    <property type="evidence" value="ECO:0007669"/>
    <property type="project" value="TreeGrafter"/>
</dbReference>
<dbReference type="CDD" id="cd00466">
    <property type="entry name" value="DHQase_II"/>
    <property type="match status" value="1"/>
</dbReference>
<dbReference type="Gene3D" id="3.40.50.9100">
    <property type="entry name" value="Dehydroquinase, class II"/>
    <property type="match status" value="1"/>
</dbReference>
<dbReference type="HAMAP" id="MF_00169">
    <property type="entry name" value="AroQ"/>
    <property type="match status" value="1"/>
</dbReference>
<dbReference type="InterPro" id="IPR001874">
    <property type="entry name" value="DHquinase_II"/>
</dbReference>
<dbReference type="InterPro" id="IPR018509">
    <property type="entry name" value="DHquinase_II_CS"/>
</dbReference>
<dbReference type="InterPro" id="IPR036441">
    <property type="entry name" value="DHquinase_II_sf"/>
</dbReference>
<dbReference type="NCBIfam" id="TIGR01088">
    <property type="entry name" value="aroQ"/>
    <property type="match status" value="1"/>
</dbReference>
<dbReference type="NCBIfam" id="NF003804">
    <property type="entry name" value="PRK05395.1-1"/>
    <property type="match status" value="1"/>
</dbReference>
<dbReference type="NCBIfam" id="NF003805">
    <property type="entry name" value="PRK05395.1-2"/>
    <property type="match status" value="1"/>
</dbReference>
<dbReference type="NCBIfam" id="NF003806">
    <property type="entry name" value="PRK05395.1-3"/>
    <property type="match status" value="1"/>
</dbReference>
<dbReference type="NCBIfam" id="NF003807">
    <property type="entry name" value="PRK05395.1-4"/>
    <property type="match status" value="1"/>
</dbReference>
<dbReference type="PANTHER" id="PTHR21272">
    <property type="entry name" value="CATABOLIC 3-DEHYDROQUINASE"/>
    <property type="match status" value="1"/>
</dbReference>
<dbReference type="PANTHER" id="PTHR21272:SF3">
    <property type="entry name" value="CATABOLIC 3-DEHYDROQUINASE"/>
    <property type="match status" value="1"/>
</dbReference>
<dbReference type="Pfam" id="PF01220">
    <property type="entry name" value="DHquinase_II"/>
    <property type="match status" value="1"/>
</dbReference>
<dbReference type="PIRSF" id="PIRSF001399">
    <property type="entry name" value="DHquinase_II"/>
    <property type="match status" value="1"/>
</dbReference>
<dbReference type="SUPFAM" id="SSF52304">
    <property type="entry name" value="Type II 3-dehydroquinate dehydratase"/>
    <property type="match status" value="1"/>
</dbReference>
<dbReference type="PROSITE" id="PS01029">
    <property type="entry name" value="DEHYDROQUINASE_II"/>
    <property type="match status" value="1"/>
</dbReference>
<keyword id="KW-0028">Amino-acid biosynthesis</keyword>
<keyword id="KW-0057">Aromatic amino acid biosynthesis</keyword>
<keyword id="KW-0456">Lyase</keyword>
<keyword id="KW-1185">Reference proteome</keyword>
<protein>
    <recommendedName>
        <fullName evidence="1">3-dehydroquinate dehydratase</fullName>
        <shortName evidence="1">3-dehydroquinase</shortName>
        <ecNumber evidence="1">4.2.1.10</ecNumber>
    </recommendedName>
    <alternativeName>
        <fullName evidence="1">Type II DHQase</fullName>
    </alternativeName>
</protein>
<organism>
    <name type="scientific">Shewanella denitrificans (strain OS217 / ATCC BAA-1090 / DSM 15013)</name>
    <dbReference type="NCBI Taxonomy" id="318161"/>
    <lineage>
        <taxon>Bacteria</taxon>
        <taxon>Pseudomonadati</taxon>
        <taxon>Pseudomonadota</taxon>
        <taxon>Gammaproteobacteria</taxon>
        <taxon>Alteromonadales</taxon>
        <taxon>Shewanellaceae</taxon>
        <taxon>Shewanella</taxon>
    </lineage>
</organism>